<proteinExistence type="inferred from homology"/>
<protein>
    <recommendedName>
        <fullName evidence="1">Thymidylate kinase</fullName>
        <ecNumber evidence="1">2.7.4.9</ecNumber>
    </recommendedName>
    <alternativeName>
        <fullName evidence="1">dTMP kinase</fullName>
    </alternativeName>
</protein>
<dbReference type="EC" id="2.7.4.9" evidence="1"/>
<dbReference type="EMBL" id="CP001052">
    <property type="protein sequence ID" value="ACD16347.1"/>
    <property type="molecule type" value="Genomic_DNA"/>
</dbReference>
<dbReference type="RefSeq" id="WP_012432947.1">
    <property type="nucleotide sequence ID" value="NC_010681.1"/>
</dbReference>
<dbReference type="SMR" id="B2T436"/>
<dbReference type="STRING" id="398527.Bphyt_1939"/>
<dbReference type="KEGG" id="bpy:Bphyt_1939"/>
<dbReference type="eggNOG" id="COG0125">
    <property type="taxonomic scope" value="Bacteria"/>
</dbReference>
<dbReference type="HOGENOM" id="CLU_049131_0_2_4"/>
<dbReference type="OrthoDB" id="9774907at2"/>
<dbReference type="Proteomes" id="UP000001739">
    <property type="component" value="Chromosome 1"/>
</dbReference>
<dbReference type="GO" id="GO:0005829">
    <property type="term" value="C:cytosol"/>
    <property type="evidence" value="ECO:0007669"/>
    <property type="project" value="TreeGrafter"/>
</dbReference>
<dbReference type="GO" id="GO:0005524">
    <property type="term" value="F:ATP binding"/>
    <property type="evidence" value="ECO:0007669"/>
    <property type="project" value="UniProtKB-UniRule"/>
</dbReference>
<dbReference type="GO" id="GO:0004798">
    <property type="term" value="F:dTMP kinase activity"/>
    <property type="evidence" value="ECO:0007669"/>
    <property type="project" value="UniProtKB-UniRule"/>
</dbReference>
<dbReference type="GO" id="GO:0006233">
    <property type="term" value="P:dTDP biosynthetic process"/>
    <property type="evidence" value="ECO:0007669"/>
    <property type="project" value="InterPro"/>
</dbReference>
<dbReference type="GO" id="GO:0006235">
    <property type="term" value="P:dTTP biosynthetic process"/>
    <property type="evidence" value="ECO:0007669"/>
    <property type="project" value="UniProtKB-UniRule"/>
</dbReference>
<dbReference type="GO" id="GO:0006227">
    <property type="term" value="P:dUDP biosynthetic process"/>
    <property type="evidence" value="ECO:0007669"/>
    <property type="project" value="TreeGrafter"/>
</dbReference>
<dbReference type="CDD" id="cd01672">
    <property type="entry name" value="TMPK"/>
    <property type="match status" value="1"/>
</dbReference>
<dbReference type="FunFam" id="3.40.50.300:FF:000225">
    <property type="entry name" value="Thymidylate kinase"/>
    <property type="match status" value="1"/>
</dbReference>
<dbReference type="Gene3D" id="3.40.50.300">
    <property type="entry name" value="P-loop containing nucleotide triphosphate hydrolases"/>
    <property type="match status" value="1"/>
</dbReference>
<dbReference type="HAMAP" id="MF_00165">
    <property type="entry name" value="Thymidylate_kinase"/>
    <property type="match status" value="1"/>
</dbReference>
<dbReference type="InterPro" id="IPR027417">
    <property type="entry name" value="P-loop_NTPase"/>
</dbReference>
<dbReference type="InterPro" id="IPR039430">
    <property type="entry name" value="Thymidylate_kin-like_dom"/>
</dbReference>
<dbReference type="InterPro" id="IPR018094">
    <property type="entry name" value="Thymidylate_kinase"/>
</dbReference>
<dbReference type="NCBIfam" id="TIGR00041">
    <property type="entry name" value="DTMP_kinase"/>
    <property type="match status" value="1"/>
</dbReference>
<dbReference type="PANTHER" id="PTHR10344">
    <property type="entry name" value="THYMIDYLATE KINASE"/>
    <property type="match status" value="1"/>
</dbReference>
<dbReference type="PANTHER" id="PTHR10344:SF4">
    <property type="entry name" value="UMP-CMP KINASE 2, MITOCHONDRIAL"/>
    <property type="match status" value="1"/>
</dbReference>
<dbReference type="Pfam" id="PF02223">
    <property type="entry name" value="Thymidylate_kin"/>
    <property type="match status" value="1"/>
</dbReference>
<dbReference type="SUPFAM" id="SSF52540">
    <property type="entry name" value="P-loop containing nucleoside triphosphate hydrolases"/>
    <property type="match status" value="1"/>
</dbReference>
<evidence type="ECO:0000255" key="1">
    <source>
        <dbReference type="HAMAP-Rule" id="MF_00165"/>
    </source>
</evidence>
<reference key="1">
    <citation type="journal article" date="2011" name="J. Bacteriol.">
        <title>Complete genome sequence of the plant growth-promoting endophyte Burkholderia phytofirmans strain PsJN.</title>
        <authorList>
            <person name="Weilharter A."/>
            <person name="Mitter B."/>
            <person name="Shin M.V."/>
            <person name="Chain P.S."/>
            <person name="Nowak J."/>
            <person name="Sessitsch A."/>
        </authorList>
    </citation>
    <scope>NUCLEOTIDE SEQUENCE [LARGE SCALE GENOMIC DNA]</scope>
    <source>
        <strain>DSM 17436 / LMG 22146 / PsJN</strain>
    </source>
</reference>
<comment type="function">
    <text evidence="1">Phosphorylation of dTMP to form dTDP in both de novo and salvage pathways of dTTP synthesis.</text>
</comment>
<comment type="catalytic activity">
    <reaction evidence="1">
        <text>dTMP + ATP = dTDP + ADP</text>
        <dbReference type="Rhea" id="RHEA:13517"/>
        <dbReference type="ChEBI" id="CHEBI:30616"/>
        <dbReference type="ChEBI" id="CHEBI:58369"/>
        <dbReference type="ChEBI" id="CHEBI:63528"/>
        <dbReference type="ChEBI" id="CHEBI:456216"/>
        <dbReference type="EC" id="2.7.4.9"/>
    </reaction>
</comment>
<comment type="similarity">
    <text evidence="1">Belongs to the thymidylate kinase family.</text>
</comment>
<sequence>MARGKFITFEGIDGAGKTTHLSWFRERLEQKVASTGRSVVMTREPGGTPLGEQIREIVLHQKMDLETEALLMFALRRQHLAEVIEPALARGDWVLSDRFTDATFAYQGGGRGLPRDKLETLERWVQGGFQPDLTVLFDLAPEIANERRSAARDPDRFESESVAFFNRTRAEYLRRAEEAPYRFAIIDSAQSIVQIQRKLEELIAIL</sequence>
<accession>B2T436</accession>
<organism>
    <name type="scientific">Paraburkholderia phytofirmans (strain DSM 17436 / LMG 22146 / PsJN)</name>
    <name type="common">Burkholderia phytofirmans</name>
    <dbReference type="NCBI Taxonomy" id="398527"/>
    <lineage>
        <taxon>Bacteria</taxon>
        <taxon>Pseudomonadati</taxon>
        <taxon>Pseudomonadota</taxon>
        <taxon>Betaproteobacteria</taxon>
        <taxon>Burkholderiales</taxon>
        <taxon>Burkholderiaceae</taxon>
        <taxon>Paraburkholderia</taxon>
    </lineage>
</organism>
<feature type="chain" id="PRO_1000097383" description="Thymidylate kinase">
    <location>
        <begin position="1"/>
        <end position="206"/>
    </location>
</feature>
<feature type="binding site" evidence="1">
    <location>
        <begin position="11"/>
        <end position="18"/>
    </location>
    <ligand>
        <name>ATP</name>
        <dbReference type="ChEBI" id="CHEBI:30616"/>
    </ligand>
</feature>
<keyword id="KW-0067">ATP-binding</keyword>
<keyword id="KW-0418">Kinase</keyword>
<keyword id="KW-0545">Nucleotide biosynthesis</keyword>
<keyword id="KW-0547">Nucleotide-binding</keyword>
<keyword id="KW-0808">Transferase</keyword>
<name>KTHY_PARPJ</name>
<gene>
    <name evidence="1" type="primary">tmk</name>
    <name type="ordered locus">Bphyt_1939</name>
</gene>